<accession>B0BQT7</accession>
<sequence>MNKLTPDEAIDLAYDIFLEMAGENLDPADILLFNLQFEERGAVEMVETSENWDQEIGTLIDPDAFAEVWVGLVNDKDEMDDVFARFLISHDADNREYHVIWKE</sequence>
<feature type="chain" id="PRO_1000131699" description="Putative double-stranded DNA mimic protein APJL_1366">
    <location>
        <begin position="1"/>
        <end position="103"/>
    </location>
</feature>
<gene>
    <name type="ordered locus">APJL_1366</name>
</gene>
<name>Y1366_ACTPJ</name>
<dbReference type="EMBL" id="CP000687">
    <property type="protein sequence ID" value="ABY69922.1"/>
    <property type="molecule type" value="Genomic_DNA"/>
</dbReference>
<dbReference type="RefSeq" id="WP_005598462.1">
    <property type="nucleotide sequence ID" value="NC_010278.1"/>
</dbReference>
<dbReference type="SMR" id="B0BQT7"/>
<dbReference type="KEGG" id="apj:APJL_1366"/>
<dbReference type="HOGENOM" id="CLU_143392_0_0_6"/>
<dbReference type="Proteomes" id="UP000008547">
    <property type="component" value="Chromosome"/>
</dbReference>
<dbReference type="Gene3D" id="3.10.450.140">
    <property type="entry name" value="dsDNA mimic, putative"/>
    <property type="match status" value="1"/>
</dbReference>
<dbReference type="HAMAP" id="MF_00680">
    <property type="entry name" value="Put_dsDNA_mimic"/>
    <property type="match status" value="1"/>
</dbReference>
<dbReference type="InterPro" id="IPR007376">
    <property type="entry name" value="dsDNA_mimic_put"/>
</dbReference>
<dbReference type="InterPro" id="IPR036763">
    <property type="entry name" value="Put_dsDNA_mimic_sf"/>
</dbReference>
<dbReference type="NCBIfam" id="NF003469">
    <property type="entry name" value="PRK05094.1"/>
    <property type="match status" value="1"/>
</dbReference>
<dbReference type="Pfam" id="PF04269">
    <property type="entry name" value="DUF440"/>
    <property type="match status" value="1"/>
</dbReference>
<dbReference type="PIRSF" id="PIRSF004916">
    <property type="entry name" value="UCP004916"/>
    <property type="match status" value="1"/>
</dbReference>
<dbReference type="SUPFAM" id="SSF102816">
    <property type="entry name" value="Putative dsDNA mimic"/>
    <property type="match status" value="1"/>
</dbReference>
<protein>
    <recommendedName>
        <fullName evidence="1">Putative double-stranded DNA mimic protein APJL_1366</fullName>
    </recommendedName>
</protein>
<organism>
    <name type="scientific">Actinobacillus pleuropneumoniae serotype 3 (strain JL03)</name>
    <dbReference type="NCBI Taxonomy" id="434271"/>
    <lineage>
        <taxon>Bacteria</taxon>
        <taxon>Pseudomonadati</taxon>
        <taxon>Pseudomonadota</taxon>
        <taxon>Gammaproteobacteria</taxon>
        <taxon>Pasteurellales</taxon>
        <taxon>Pasteurellaceae</taxon>
        <taxon>Actinobacillus</taxon>
    </lineage>
</organism>
<proteinExistence type="inferred from homology"/>
<comment type="function">
    <text evidence="1">May act as a double-stranded DNA (dsDNA) mimic. Probably regulates the activity of a dsDNA-binding protein.</text>
</comment>
<comment type="similarity">
    <text evidence="1">Belongs to the putative dsDNA mimic protein family.</text>
</comment>
<reference key="1">
    <citation type="journal article" date="2008" name="PLoS ONE">
        <title>Genome biology of Actinobacillus pleuropneumoniae JL03, an isolate of serotype 3 prevalent in China.</title>
        <authorList>
            <person name="Xu Z."/>
            <person name="Zhou Y."/>
            <person name="Li L."/>
            <person name="Zhou R."/>
            <person name="Xiao S."/>
            <person name="Wan Y."/>
            <person name="Zhang S."/>
            <person name="Wang K."/>
            <person name="Li W."/>
            <person name="Li L."/>
            <person name="Jin H."/>
            <person name="Kang M."/>
            <person name="Dalai B."/>
            <person name="Li T."/>
            <person name="Liu L."/>
            <person name="Cheng Y."/>
            <person name="Zhang L."/>
            <person name="Xu T."/>
            <person name="Zheng H."/>
            <person name="Pu S."/>
            <person name="Wang B."/>
            <person name="Gu W."/>
            <person name="Zhang X.L."/>
            <person name="Zhu G.-F."/>
            <person name="Wang S."/>
            <person name="Zhao G.-P."/>
            <person name="Chen H."/>
        </authorList>
    </citation>
    <scope>NUCLEOTIDE SEQUENCE [LARGE SCALE GENOMIC DNA]</scope>
    <source>
        <strain>JL03</strain>
    </source>
</reference>
<evidence type="ECO:0000255" key="1">
    <source>
        <dbReference type="HAMAP-Rule" id="MF_00680"/>
    </source>
</evidence>